<comment type="function">
    <text evidence="1">May act as a double-stranded DNA (dsDNA) mimic. Probably regulates the activity of a dsDNA-binding protein.</text>
</comment>
<comment type="similarity">
    <text evidence="1">Belongs to the putative dsDNA mimic protein family.</text>
</comment>
<proteinExistence type="inferred from homology"/>
<feature type="chain" id="PRO_1000044906" description="Putative double-stranded DNA mimic protein YciU">
    <location>
        <begin position="1"/>
        <end position="109"/>
    </location>
</feature>
<reference key="1">
    <citation type="journal article" date="2006" name="Mol. Microbiol.">
        <title>Role of pathogenicity island-associated integrases in the genome plasticity of uropathogenic Escherichia coli strain 536.</title>
        <authorList>
            <person name="Hochhut B."/>
            <person name="Wilde C."/>
            <person name="Balling G."/>
            <person name="Middendorf B."/>
            <person name="Dobrindt U."/>
            <person name="Brzuszkiewicz E."/>
            <person name="Gottschalk G."/>
            <person name="Carniel E."/>
            <person name="Hacker J."/>
        </authorList>
    </citation>
    <scope>NUCLEOTIDE SEQUENCE [LARGE SCALE GENOMIC DNA]</scope>
    <source>
        <strain>536 / UPEC</strain>
    </source>
</reference>
<evidence type="ECO:0000255" key="1">
    <source>
        <dbReference type="HAMAP-Rule" id="MF_00680"/>
    </source>
</evidence>
<protein>
    <recommendedName>
        <fullName evidence="1">Putative double-stranded DNA mimic protein YciU</fullName>
    </recommendedName>
</protein>
<gene>
    <name evidence="1" type="primary">yciU</name>
    <name type="ordered locus">ECP_1295</name>
</gene>
<accession>Q0TIC3</accession>
<organism>
    <name type="scientific">Escherichia coli O6:K15:H31 (strain 536 / UPEC)</name>
    <dbReference type="NCBI Taxonomy" id="362663"/>
    <lineage>
        <taxon>Bacteria</taxon>
        <taxon>Pseudomonadati</taxon>
        <taxon>Pseudomonadota</taxon>
        <taxon>Gammaproteobacteria</taxon>
        <taxon>Enterobacterales</taxon>
        <taxon>Enterobacteriaceae</taxon>
        <taxon>Escherichia</taxon>
    </lineage>
</organism>
<dbReference type="EMBL" id="CP000247">
    <property type="protein sequence ID" value="ABG69306.1"/>
    <property type="molecule type" value="Genomic_DNA"/>
</dbReference>
<dbReference type="RefSeq" id="WP_000366959.1">
    <property type="nucleotide sequence ID" value="NC_008253.1"/>
</dbReference>
<dbReference type="SMR" id="Q0TIC3"/>
<dbReference type="KEGG" id="ecp:ECP_1295"/>
<dbReference type="HOGENOM" id="CLU_143392_0_0_6"/>
<dbReference type="Proteomes" id="UP000009182">
    <property type="component" value="Chromosome"/>
</dbReference>
<dbReference type="Gene3D" id="3.10.450.140">
    <property type="entry name" value="dsDNA mimic, putative"/>
    <property type="match status" value="1"/>
</dbReference>
<dbReference type="HAMAP" id="MF_00680">
    <property type="entry name" value="Put_dsDNA_mimic"/>
    <property type="match status" value="1"/>
</dbReference>
<dbReference type="InterPro" id="IPR007376">
    <property type="entry name" value="dsDNA_mimic_put"/>
</dbReference>
<dbReference type="InterPro" id="IPR036763">
    <property type="entry name" value="Put_dsDNA_mimic_sf"/>
</dbReference>
<dbReference type="NCBIfam" id="NF003469">
    <property type="entry name" value="PRK05094.1"/>
    <property type="match status" value="1"/>
</dbReference>
<dbReference type="Pfam" id="PF04269">
    <property type="entry name" value="DUF440"/>
    <property type="match status" value="1"/>
</dbReference>
<dbReference type="PIRSF" id="PIRSF004916">
    <property type="entry name" value="UCP004916"/>
    <property type="match status" value="1"/>
</dbReference>
<dbReference type="SUPFAM" id="SSF102816">
    <property type="entry name" value="Putative dsDNA mimic"/>
    <property type="match status" value="1"/>
</dbReference>
<name>YCIU_ECOL5</name>
<sequence>MDMDLNNRLTEDETLEQAYDIFLELAADNLDPADVLLFNLQFEERGGAELFDPAEDWQEHVDFDLNPDFFAEVVIGLADSEDGEINDVFARILLCREKDHKLCHIIWRE</sequence>